<keyword id="KW-0660">Purine salvage</keyword>
<keyword id="KW-0808">Transferase</keyword>
<gene>
    <name type="ordered locus">OE_1840R</name>
</gene>
<organism>
    <name type="scientific">Halobacterium salinarum (strain ATCC 29341 / DSM 671 / R1)</name>
    <dbReference type="NCBI Taxonomy" id="478009"/>
    <lineage>
        <taxon>Archaea</taxon>
        <taxon>Methanobacteriati</taxon>
        <taxon>Methanobacteriota</taxon>
        <taxon>Stenosarchaea group</taxon>
        <taxon>Halobacteria</taxon>
        <taxon>Halobacteriales</taxon>
        <taxon>Halobacteriaceae</taxon>
        <taxon>Halobacterium</taxon>
        <taxon>Halobacterium salinarum NRC-34001</taxon>
    </lineage>
</organism>
<evidence type="ECO:0000255" key="1">
    <source>
        <dbReference type="HAMAP-Rule" id="MF_01467"/>
    </source>
</evidence>
<proteinExistence type="inferred from homology"/>
<comment type="function">
    <text evidence="1">May catalyze a purine salvage reaction, the substrate is unknown.</text>
</comment>
<comment type="similarity">
    <text evidence="1">Belongs to the purine/pyrimidine phosphoribosyltransferase family. Archaeal HPRT subfamily.</text>
</comment>
<dbReference type="EC" id="2.4.2.-" evidence="1"/>
<dbReference type="EMBL" id="AM774415">
    <property type="protein sequence ID" value="CAP13342.1"/>
    <property type="molecule type" value="Genomic_DNA"/>
</dbReference>
<dbReference type="SMR" id="B0R3M8"/>
<dbReference type="EnsemblBacteria" id="CAP13342">
    <property type="protein sequence ID" value="CAP13342"/>
    <property type="gene ID" value="OE_1840R"/>
</dbReference>
<dbReference type="KEGG" id="hsl:OE_1840R"/>
<dbReference type="HOGENOM" id="CLU_126376_0_0_2"/>
<dbReference type="PhylomeDB" id="B0R3M8"/>
<dbReference type="Proteomes" id="UP000001321">
    <property type="component" value="Chromosome"/>
</dbReference>
<dbReference type="GO" id="GO:0016740">
    <property type="term" value="F:transferase activity"/>
    <property type="evidence" value="ECO:0007669"/>
    <property type="project" value="UniProtKB-KW"/>
</dbReference>
<dbReference type="GO" id="GO:0006166">
    <property type="term" value="P:purine ribonucleoside salvage"/>
    <property type="evidence" value="ECO:0007669"/>
    <property type="project" value="UniProtKB-KW"/>
</dbReference>
<dbReference type="CDD" id="cd06223">
    <property type="entry name" value="PRTases_typeI"/>
    <property type="match status" value="1"/>
</dbReference>
<dbReference type="Gene3D" id="3.40.50.2020">
    <property type="match status" value="1"/>
</dbReference>
<dbReference type="HAMAP" id="MF_01467">
    <property type="entry name" value="Hypx_phosphoribosyltr"/>
    <property type="match status" value="1"/>
</dbReference>
<dbReference type="InterPro" id="IPR026597">
    <property type="entry name" value="HGPRTase-like"/>
</dbReference>
<dbReference type="InterPro" id="IPR000836">
    <property type="entry name" value="PRibTrfase_dom"/>
</dbReference>
<dbReference type="InterPro" id="IPR029057">
    <property type="entry name" value="PRTase-like"/>
</dbReference>
<dbReference type="InterPro" id="IPR050118">
    <property type="entry name" value="Pur/Pyrimidine_PRTase"/>
</dbReference>
<dbReference type="NCBIfam" id="NF040646">
    <property type="entry name" value="HPT_Archaea"/>
    <property type="match status" value="1"/>
</dbReference>
<dbReference type="NCBIfam" id="NF002635">
    <property type="entry name" value="PRK02304.1-4"/>
    <property type="match status" value="1"/>
</dbReference>
<dbReference type="PANTHER" id="PTHR43864">
    <property type="entry name" value="HYPOXANTHINE/GUANINE PHOSPHORIBOSYLTRANSFERASE"/>
    <property type="match status" value="1"/>
</dbReference>
<dbReference type="PANTHER" id="PTHR43864:SF1">
    <property type="entry name" value="XANTHINE PHOSPHORIBOSYLTRANSFERASE"/>
    <property type="match status" value="1"/>
</dbReference>
<dbReference type="Pfam" id="PF00156">
    <property type="entry name" value="Pribosyltran"/>
    <property type="match status" value="1"/>
</dbReference>
<dbReference type="SUPFAM" id="SSF53271">
    <property type="entry name" value="PRTase-like"/>
    <property type="match status" value="1"/>
</dbReference>
<dbReference type="PROSITE" id="PS00103">
    <property type="entry name" value="PUR_PYR_PR_TRANSFER"/>
    <property type="match status" value="1"/>
</dbReference>
<reference key="1">
    <citation type="journal article" date="2008" name="Genomics">
        <title>Evolution in the laboratory: the genome of Halobacterium salinarum strain R1 compared to that of strain NRC-1.</title>
        <authorList>
            <person name="Pfeiffer F."/>
            <person name="Schuster S.C."/>
            <person name="Broicher A."/>
            <person name="Falb M."/>
            <person name="Palm P."/>
            <person name="Rodewald K."/>
            <person name="Ruepp A."/>
            <person name="Soppa J."/>
            <person name="Tittor J."/>
            <person name="Oesterhelt D."/>
        </authorList>
    </citation>
    <scope>NUCLEOTIDE SEQUENCE [LARGE SCALE GENOMIC DNA]</scope>
    <source>
        <strain>ATCC 29341 / DSM 671 / R1</strain>
    </source>
</reference>
<feature type="chain" id="PRO_1000088977" description="HGPRTase-like protein">
    <location>
        <begin position="1"/>
        <end position="188"/>
    </location>
</feature>
<sequence length="188" mass="20613">MDRLKQSLLDAPIIEKDGYHYFVHPISDGVPMLEPELLREIVIRIIRKAELDEVDKIVTPAAMGIHISTAVSLMTDIPIVVIRKREYGLPGEVALSQETGYSENEMYINDVHEGDRVLVLDDVLSTGGTLRAITDALEQTGADVADVLAVIKKAGPNELDDTDMDVRTLINVDVADGEVVVVDDQGDH</sequence>
<name>HPRL_HALS3</name>
<protein>
    <recommendedName>
        <fullName evidence="1">HGPRTase-like protein</fullName>
        <ecNumber evidence="1">2.4.2.-</ecNumber>
    </recommendedName>
</protein>
<accession>B0R3M8</accession>